<protein>
    <recommendedName>
        <fullName evidence="1">Ribonuclease D</fullName>
        <shortName evidence="1">RNase D</shortName>
        <ecNumber evidence="1">3.1.13.5</ecNumber>
    </recommendedName>
</protein>
<reference key="1">
    <citation type="journal article" date="2008" name="BMC Genomics">
        <title>Genomics of an extreme psychrophile, Psychromonas ingrahamii.</title>
        <authorList>
            <person name="Riley M."/>
            <person name="Staley J.T."/>
            <person name="Danchin A."/>
            <person name="Wang T.Z."/>
            <person name="Brettin T.S."/>
            <person name="Hauser L.J."/>
            <person name="Land M.L."/>
            <person name="Thompson L.S."/>
        </authorList>
    </citation>
    <scope>NUCLEOTIDE SEQUENCE [LARGE SCALE GENOMIC DNA]</scope>
    <source>
        <strain>DSM 17664 / CCUG 51855 / 37</strain>
    </source>
</reference>
<organism>
    <name type="scientific">Psychromonas ingrahamii (strain DSM 17664 / CCUG 51855 / 37)</name>
    <dbReference type="NCBI Taxonomy" id="357804"/>
    <lineage>
        <taxon>Bacteria</taxon>
        <taxon>Pseudomonadati</taxon>
        <taxon>Pseudomonadota</taxon>
        <taxon>Gammaproteobacteria</taxon>
        <taxon>Alteromonadales</taxon>
        <taxon>Psychromonadaceae</taxon>
        <taxon>Psychromonas</taxon>
    </lineage>
</organism>
<comment type="function">
    <text evidence="1">Exonuclease involved in the 3' processing of various precursor tRNAs. Initiates hydrolysis at the 3'-terminus of an RNA molecule and releases 5'-mononucleotides.</text>
</comment>
<comment type="catalytic activity">
    <reaction evidence="1">
        <text>Exonucleolytic cleavage that removes extra residues from the 3'-terminus of tRNA to produce 5'-mononucleotides.</text>
        <dbReference type="EC" id="3.1.13.5"/>
    </reaction>
</comment>
<comment type="cofactor">
    <cofactor evidence="1">
        <name>a divalent metal cation</name>
        <dbReference type="ChEBI" id="CHEBI:60240"/>
    </cofactor>
</comment>
<comment type="subcellular location">
    <subcellularLocation>
        <location evidence="1">Cytoplasm</location>
    </subcellularLocation>
</comment>
<comment type="similarity">
    <text evidence="1">Belongs to the RNase D family.</text>
</comment>
<keyword id="KW-0963">Cytoplasm</keyword>
<keyword id="KW-0269">Exonuclease</keyword>
<keyword id="KW-0378">Hydrolase</keyword>
<keyword id="KW-0540">Nuclease</keyword>
<keyword id="KW-1185">Reference proteome</keyword>
<keyword id="KW-0819">tRNA processing</keyword>
<sequence length="369" mass="42462">MQFEIITTTAQLHDFIATLDGSPISLDTEFVRTRTYAANLGLLQISQNTQITLIDPIAVGDLSSFWQAIDNKNIILHASSEDLEIIRDHKGDLNFTLFDTQIACSFLNMGASLGYAKMVETLEAVIVDKGESRTDWCARPLSEKQINYAGVDVLYLQPCLEKLQQQLENKKMFPFFEQECQSVLAQKMVKQDPDKAYKLLNNLFKLDRQGLAIIKALAKWRLLTAQERNLALNFVVKADHLWLLAYYQPTSLDDLRRLNLLPNEIRIHGQQILTIMTQVISQDESTYPPLVNRLVDFPAYKSTVKSMRDKIQLCAEKYDLPLELLASKRVINEYLSWLWKLTNLQRQTANKPKLLTGWRFELIGHQFEH</sequence>
<name>RND_PSYIN</name>
<gene>
    <name evidence="1" type="primary">rnd</name>
    <name type="ordered locus">Ping_1668</name>
</gene>
<dbReference type="EC" id="3.1.13.5" evidence="1"/>
<dbReference type="EMBL" id="CP000510">
    <property type="protein sequence ID" value="ABM03461.1"/>
    <property type="molecule type" value="Genomic_DNA"/>
</dbReference>
<dbReference type="RefSeq" id="WP_011770021.1">
    <property type="nucleotide sequence ID" value="NC_008709.1"/>
</dbReference>
<dbReference type="SMR" id="A1SVE6"/>
<dbReference type="STRING" id="357804.Ping_1668"/>
<dbReference type="KEGG" id="pin:Ping_1668"/>
<dbReference type="eggNOG" id="COG0349">
    <property type="taxonomic scope" value="Bacteria"/>
</dbReference>
<dbReference type="HOGENOM" id="CLU_042387_0_1_6"/>
<dbReference type="OrthoDB" id="9800549at2"/>
<dbReference type="Proteomes" id="UP000000639">
    <property type="component" value="Chromosome"/>
</dbReference>
<dbReference type="GO" id="GO:0005737">
    <property type="term" value="C:cytoplasm"/>
    <property type="evidence" value="ECO:0007669"/>
    <property type="project" value="UniProtKB-SubCell"/>
</dbReference>
<dbReference type="GO" id="GO:0008408">
    <property type="term" value="F:3'-5' exonuclease activity"/>
    <property type="evidence" value="ECO:0007669"/>
    <property type="project" value="InterPro"/>
</dbReference>
<dbReference type="GO" id="GO:0003676">
    <property type="term" value="F:nucleic acid binding"/>
    <property type="evidence" value="ECO:0007669"/>
    <property type="project" value="InterPro"/>
</dbReference>
<dbReference type="GO" id="GO:0000166">
    <property type="term" value="F:nucleotide binding"/>
    <property type="evidence" value="ECO:0007669"/>
    <property type="project" value="InterPro"/>
</dbReference>
<dbReference type="GO" id="GO:0033890">
    <property type="term" value="F:ribonuclease D activity"/>
    <property type="evidence" value="ECO:0007669"/>
    <property type="project" value="UniProtKB-UniRule"/>
</dbReference>
<dbReference type="GO" id="GO:0042780">
    <property type="term" value="P:tRNA 3'-end processing"/>
    <property type="evidence" value="ECO:0007669"/>
    <property type="project" value="UniProtKB-UniRule"/>
</dbReference>
<dbReference type="CDD" id="cd06142">
    <property type="entry name" value="RNaseD_exo"/>
    <property type="match status" value="1"/>
</dbReference>
<dbReference type="Gene3D" id="1.10.150.80">
    <property type="entry name" value="HRDC domain"/>
    <property type="match status" value="2"/>
</dbReference>
<dbReference type="Gene3D" id="3.30.420.10">
    <property type="entry name" value="Ribonuclease H-like superfamily/Ribonuclease H"/>
    <property type="match status" value="1"/>
</dbReference>
<dbReference type="HAMAP" id="MF_01899">
    <property type="entry name" value="RNase_D"/>
    <property type="match status" value="1"/>
</dbReference>
<dbReference type="InterPro" id="IPR002562">
    <property type="entry name" value="3'-5'_exonuclease_dom"/>
</dbReference>
<dbReference type="InterPro" id="IPR010997">
    <property type="entry name" value="HRDC-like_sf"/>
</dbReference>
<dbReference type="InterPro" id="IPR002121">
    <property type="entry name" value="HRDC_dom"/>
</dbReference>
<dbReference type="InterPro" id="IPR044876">
    <property type="entry name" value="HRDC_dom_sf"/>
</dbReference>
<dbReference type="InterPro" id="IPR006292">
    <property type="entry name" value="RNase_D"/>
</dbReference>
<dbReference type="InterPro" id="IPR051086">
    <property type="entry name" value="RNase_D-like"/>
</dbReference>
<dbReference type="InterPro" id="IPR048579">
    <property type="entry name" value="RNAseD_HRDC_C"/>
</dbReference>
<dbReference type="InterPro" id="IPR012337">
    <property type="entry name" value="RNaseH-like_sf"/>
</dbReference>
<dbReference type="InterPro" id="IPR036397">
    <property type="entry name" value="RNaseH_sf"/>
</dbReference>
<dbReference type="NCBIfam" id="TIGR01388">
    <property type="entry name" value="rnd"/>
    <property type="match status" value="1"/>
</dbReference>
<dbReference type="PANTHER" id="PTHR47649">
    <property type="entry name" value="RIBONUCLEASE D"/>
    <property type="match status" value="1"/>
</dbReference>
<dbReference type="PANTHER" id="PTHR47649:SF1">
    <property type="entry name" value="RIBONUCLEASE D"/>
    <property type="match status" value="1"/>
</dbReference>
<dbReference type="Pfam" id="PF01612">
    <property type="entry name" value="DNA_pol_A_exo1"/>
    <property type="match status" value="1"/>
</dbReference>
<dbReference type="Pfam" id="PF00570">
    <property type="entry name" value="HRDC"/>
    <property type="match status" value="1"/>
</dbReference>
<dbReference type="Pfam" id="PF21293">
    <property type="entry name" value="RNAseD_HRDC_C"/>
    <property type="match status" value="1"/>
</dbReference>
<dbReference type="SMART" id="SM00474">
    <property type="entry name" value="35EXOc"/>
    <property type="match status" value="1"/>
</dbReference>
<dbReference type="SMART" id="SM00341">
    <property type="entry name" value="HRDC"/>
    <property type="match status" value="1"/>
</dbReference>
<dbReference type="SUPFAM" id="SSF47819">
    <property type="entry name" value="HRDC-like"/>
    <property type="match status" value="2"/>
</dbReference>
<dbReference type="SUPFAM" id="SSF53098">
    <property type="entry name" value="Ribonuclease H-like"/>
    <property type="match status" value="1"/>
</dbReference>
<dbReference type="PROSITE" id="PS50967">
    <property type="entry name" value="HRDC"/>
    <property type="match status" value="1"/>
</dbReference>
<proteinExistence type="inferred from homology"/>
<accession>A1SVE6</accession>
<evidence type="ECO:0000255" key="1">
    <source>
        <dbReference type="HAMAP-Rule" id="MF_01899"/>
    </source>
</evidence>
<feature type="chain" id="PRO_0000411070" description="Ribonuclease D">
    <location>
        <begin position="1"/>
        <end position="369"/>
    </location>
</feature>
<feature type="domain" description="3'-5' exonuclease" evidence="1">
    <location>
        <begin position="4"/>
        <end position="168"/>
    </location>
</feature>
<feature type="domain" description="HRDC" evidence="1">
    <location>
        <begin position="207"/>
        <end position="286"/>
    </location>
</feature>